<comment type="function">
    <text evidence="1">The alpha subunit is responsible for the aldol cleavage of indoleglycerol phosphate to indole and glyceraldehyde 3-phosphate.</text>
</comment>
<comment type="catalytic activity">
    <reaction evidence="1">
        <text>(1S,2R)-1-C-(indol-3-yl)glycerol 3-phosphate + L-serine = D-glyceraldehyde 3-phosphate + L-tryptophan + H2O</text>
        <dbReference type="Rhea" id="RHEA:10532"/>
        <dbReference type="ChEBI" id="CHEBI:15377"/>
        <dbReference type="ChEBI" id="CHEBI:33384"/>
        <dbReference type="ChEBI" id="CHEBI:57912"/>
        <dbReference type="ChEBI" id="CHEBI:58866"/>
        <dbReference type="ChEBI" id="CHEBI:59776"/>
        <dbReference type="EC" id="4.2.1.20"/>
    </reaction>
</comment>
<comment type="pathway">
    <text evidence="1">Amino-acid biosynthesis; L-tryptophan biosynthesis; L-tryptophan from chorismate: step 5/5.</text>
</comment>
<comment type="subunit">
    <text evidence="1">Tetramer of two alpha and two beta chains.</text>
</comment>
<comment type="similarity">
    <text evidence="1">Belongs to the TrpA family.</text>
</comment>
<evidence type="ECO:0000255" key="1">
    <source>
        <dbReference type="HAMAP-Rule" id="MF_00131"/>
    </source>
</evidence>
<name>TRPA_MYCUA</name>
<proteinExistence type="inferred from homology"/>
<dbReference type="EC" id="4.2.1.20" evidence="1"/>
<dbReference type="EMBL" id="CP000325">
    <property type="protein sequence ID" value="ABL04099.1"/>
    <property type="molecule type" value="Genomic_DNA"/>
</dbReference>
<dbReference type="SMR" id="A0PP30"/>
<dbReference type="KEGG" id="mul:MUL_1593"/>
<dbReference type="eggNOG" id="COG0159">
    <property type="taxonomic scope" value="Bacteria"/>
</dbReference>
<dbReference type="HOGENOM" id="CLU_016734_0_0_11"/>
<dbReference type="UniPathway" id="UPA00035">
    <property type="reaction ID" value="UER00044"/>
</dbReference>
<dbReference type="Proteomes" id="UP000000765">
    <property type="component" value="Chromosome"/>
</dbReference>
<dbReference type="GO" id="GO:0005829">
    <property type="term" value="C:cytosol"/>
    <property type="evidence" value="ECO:0007669"/>
    <property type="project" value="TreeGrafter"/>
</dbReference>
<dbReference type="GO" id="GO:0004834">
    <property type="term" value="F:tryptophan synthase activity"/>
    <property type="evidence" value="ECO:0007669"/>
    <property type="project" value="UniProtKB-UniRule"/>
</dbReference>
<dbReference type="CDD" id="cd04724">
    <property type="entry name" value="Tryptophan_synthase_alpha"/>
    <property type="match status" value="1"/>
</dbReference>
<dbReference type="FunFam" id="3.20.20.70:FF:000037">
    <property type="entry name" value="Tryptophan synthase alpha chain"/>
    <property type="match status" value="1"/>
</dbReference>
<dbReference type="Gene3D" id="3.20.20.70">
    <property type="entry name" value="Aldolase class I"/>
    <property type="match status" value="1"/>
</dbReference>
<dbReference type="HAMAP" id="MF_00131">
    <property type="entry name" value="Trp_synth_alpha"/>
    <property type="match status" value="1"/>
</dbReference>
<dbReference type="InterPro" id="IPR013785">
    <property type="entry name" value="Aldolase_TIM"/>
</dbReference>
<dbReference type="InterPro" id="IPR011060">
    <property type="entry name" value="RibuloseP-bd_barrel"/>
</dbReference>
<dbReference type="InterPro" id="IPR018204">
    <property type="entry name" value="Trp_synthase_alpha_AS"/>
</dbReference>
<dbReference type="InterPro" id="IPR002028">
    <property type="entry name" value="Trp_synthase_suA"/>
</dbReference>
<dbReference type="NCBIfam" id="TIGR00262">
    <property type="entry name" value="trpA"/>
    <property type="match status" value="1"/>
</dbReference>
<dbReference type="PANTHER" id="PTHR43406:SF1">
    <property type="entry name" value="TRYPTOPHAN SYNTHASE ALPHA CHAIN, CHLOROPLASTIC"/>
    <property type="match status" value="1"/>
</dbReference>
<dbReference type="PANTHER" id="PTHR43406">
    <property type="entry name" value="TRYPTOPHAN SYNTHASE, ALPHA CHAIN"/>
    <property type="match status" value="1"/>
</dbReference>
<dbReference type="Pfam" id="PF00290">
    <property type="entry name" value="Trp_syntA"/>
    <property type="match status" value="1"/>
</dbReference>
<dbReference type="SUPFAM" id="SSF51366">
    <property type="entry name" value="Ribulose-phoshate binding barrel"/>
    <property type="match status" value="1"/>
</dbReference>
<dbReference type="PROSITE" id="PS00167">
    <property type="entry name" value="TRP_SYNTHASE_ALPHA"/>
    <property type="match status" value="1"/>
</dbReference>
<protein>
    <recommendedName>
        <fullName evidence="1">Tryptophan synthase alpha chain</fullName>
        <ecNumber evidence="1">4.2.1.20</ecNumber>
    </recommendedName>
</protein>
<feature type="chain" id="PRO_1000018235" description="Tryptophan synthase alpha chain">
    <location>
        <begin position="1"/>
        <end position="269"/>
    </location>
</feature>
<feature type="active site" description="Proton acceptor" evidence="1">
    <location>
        <position position="56"/>
    </location>
</feature>
<feature type="active site" description="Proton acceptor" evidence="1">
    <location>
        <position position="67"/>
    </location>
</feature>
<accession>A0PP30</accession>
<gene>
    <name evidence="1" type="primary">trpA</name>
    <name type="ordered locus">MUL_1593</name>
</gene>
<keyword id="KW-0028">Amino-acid biosynthesis</keyword>
<keyword id="KW-0057">Aromatic amino acid biosynthesis</keyword>
<keyword id="KW-0456">Lyase</keyword>
<keyword id="KW-0822">Tryptophan biosynthesis</keyword>
<organism>
    <name type="scientific">Mycobacterium ulcerans (strain Agy99)</name>
    <dbReference type="NCBI Taxonomy" id="362242"/>
    <lineage>
        <taxon>Bacteria</taxon>
        <taxon>Bacillati</taxon>
        <taxon>Actinomycetota</taxon>
        <taxon>Actinomycetes</taxon>
        <taxon>Mycobacteriales</taxon>
        <taxon>Mycobacteriaceae</taxon>
        <taxon>Mycobacterium</taxon>
        <taxon>Mycobacterium ulcerans group</taxon>
    </lineage>
</organism>
<reference key="1">
    <citation type="journal article" date="2007" name="Genome Res.">
        <title>Reductive evolution and niche adaptation inferred from the genome of Mycobacterium ulcerans, the causative agent of Buruli ulcer.</title>
        <authorList>
            <person name="Stinear T.P."/>
            <person name="Seemann T."/>
            <person name="Pidot S."/>
            <person name="Frigui W."/>
            <person name="Reysset G."/>
            <person name="Garnier T."/>
            <person name="Meurice G."/>
            <person name="Simon D."/>
            <person name="Bouchier C."/>
            <person name="Ma L."/>
            <person name="Tichit M."/>
            <person name="Porter J.L."/>
            <person name="Ryan J."/>
            <person name="Johnson P.D.R."/>
            <person name="Davies J.K."/>
            <person name="Jenkin G.A."/>
            <person name="Small P.L.C."/>
            <person name="Jones L.M."/>
            <person name="Tekaia F."/>
            <person name="Laval F."/>
            <person name="Daffe M."/>
            <person name="Parkhill J."/>
            <person name="Cole S.T."/>
        </authorList>
    </citation>
    <scope>NUCLEOTIDE SEQUENCE [LARGE SCALE GENOMIC DNA]</scope>
    <source>
        <strain>Agy99</strain>
    </source>
</reference>
<sequence length="269" mass="27890">MTVEQREASRLGPLFDSCRAENRAALIGYLPTGYPDVNTSVRAMTELVESGCDIVEVGVPYSDPGMDGPTIQRATEAALSGGVRVRDALTAVESISKAGGRAVVMTYWNPVLRYGGDAFARDLAAAGGHGLITPDLIPDEAQQWLAASDAHGLDRIFLVAPSSTPERLANTVAASRGFVYAASTMGVTGARDAVSNAAPDLVARVKAVSDIPVGVGLGVRSREQAAEIGRYADGVIVGSALVSALGDGLPSLRSLTEELAAGVRQRKSP</sequence>